<accession>Q3JMQ4</accession>
<organism>
    <name type="scientific">Burkholderia pseudomallei (strain 1710b)</name>
    <dbReference type="NCBI Taxonomy" id="320372"/>
    <lineage>
        <taxon>Bacteria</taxon>
        <taxon>Pseudomonadati</taxon>
        <taxon>Pseudomonadota</taxon>
        <taxon>Betaproteobacteria</taxon>
        <taxon>Burkholderiales</taxon>
        <taxon>Burkholderiaceae</taxon>
        <taxon>Burkholderia</taxon>
        <taxon>pseudomallei group</taxon>
    </lineage>
</organism>
<sequence>MKALLDLFKQVQQEEIFDAIKIGLASPDKIRSWSFGEVKKPETINYRTFKPERDGLFCAKIFGPIKDYECLCGKYKRLKHRGVICEKCGVEVTLAKVRRERMGHIELASPVAHIWFLKSLPSRLGMVLDMTLRDIERVLYFEAYVVIDPGMTPLKARQIMTEEDYYNKVEEYGDEFRAEMGAEGVRELLRSINIDEQVETLRTELKNTGSEAKIKKYAKRLKVLEAFQRSGIKPDWMILEVLPVLPPELRPLVPLDGGRFATSDLNDLYRRVINRNNRLKRLLELKAPEIIVRNEKRMLQEAVDSLLDNGRRGKAMTGANKRPLKSLADMIKGKGGRFRQNLLGKRVDYSGRSVIVVGPTLKLHQCGLPKLMALELFKPFIFNKLEVMGVATTIKAAKKEVENQTPVVWDILEEVIREHPVMLNRAPTLHRLGIQAFEPVLIEGKAIQLHPLVCAAFNADFDGDQMAVHVPLSLEAQMEARTLMLASNNVLFPANGDPSIVPSQDIVLGLYYATREAINGKGEGLSFTGVSEVIRAYENKEVELASRVNVRITEMVRNEDTSEGAPQFVPKISLYATTVGRAILSEILPPGLPFSVLNKPLKKKEISRLINTAFRKCGLRATVVFADQLMQSGFRLATRAGISICVDDMLVPTQKETIVGDAAKKVKEYDRQYMSGLVTAQERYNNVVDIWSATSEAVGKAMMEQLSTEPVIDRDGNETRQESFNSIYMMADSGARGSAVQIRQLAGMRGLMAKPDGSIIETPITANFREGLNVLQYFISTHGARKGLADTALKTANSGYLTRRLVDVTQDLVVVEDDCGTSNGVAMKALVEGGEVVEALRDRILGRVAASDVVNPETQETLYEAGALLDETAVEDIERLGIDEVRVRTALTCETRYGLCASCYGRDLGRGSLVNVGEAVGVIAAQSIGEPGTQLTMRTFHIGGAASRAAVASSVEAKSNGTVRFTASMRYVTNAKGEQIVISRSGEALITDDIGRERERHKIPYGATLLQLDGAAIKAGTQLATWDPLTRPIITEYGGTVKFENVEEGVTVAKQIDDVTGLSTLVVIDVKRRGSQAAKSVRPQVKLLDANGDEVKIPGTEHAVQIGFQVGALITVKDGQQVQVGEVLARIPTESQKTRDITGGLPRVAELFEARSPKDAGILAEVTGTVSFGKDTKGKQRLVITDLEGNQHEFLIAKEKQVLVHDGQVVNKGEMIVDGPADPHDILRLQGIEALSRYIVDEVQDVYRLQGVKINDKHIEVIVRQMLRRVQIVDNGDTRFIPGEQVERSDMLDENDRMIAEDKRPATYDNILLGITKASLSTDSFISAASFQETTRVLTEAAIMGKRDDLRGLKENVIVGRLIPAGTGLAFHKARKAKEQSDRERFDQIAAEEAFEFGTPSAPAEEPQHPAE</sequence>
<evidence type="ECO:0000255" key="1">
    <source>
        <dbReference type="HAMAP-Rule" id="MF_01322"/>
    </source>
</evidence>
<evidence type="ECO:0000256" key="2">
    <source>
        <dbReference type="SAM" id="MobiDB-lite"/>
    </source>
</evidence>
<feature type="chain" id="PRO_0000225519" description="DNA-directed RNA polymerase subunit beta'">
    <location>
        <begin position="1"/>
        <end position="1412"/>
    </location>
</feature>
<feature type="region of interest" description="Disordered" evidence="2">
    <location>
        <begin position="1393"/>
        <end position="1412"/>
    </location>
</feature>
<feature type="binding site" evidence="1">
    <location>
        <position position="70"/>
    </location>
    <ligand>
        <name>Zn(2+)</name>
        <dbReference type="ChEBI" id="CHEBI:29105"/>
        <label>1</label>
    </ligand>
</feature>
<feature type="binding site" evidence="1">
    <location>
        <position position="72"/>
    </location>
    <ligand>
        <name>Zn(2+)</name>
        <dbReference type="ChEBI" id="CHEBI:29105"/>
        <label>1</label>
    </ligand>
</feature>
<feature type="binding site" evidence="1">
    <location>
        <position position="85"/>
    </location>
    <ligand>
        <name>Zn(2+)</name>
        <dbReference type="ChEBI" id="CHEBI:29105"/>
        <label>1</label>
    </ligand>
</feature>
<feature type="binding site" evidence="1">
    <location>
        <position position="88"/>
    </location>
    <ligand>
        <name>Zn(2+)</name>
        <dbReference type="ChEBI" id="CHEBI:29105"/>
        <label>1</label>
    </ligand>
</feature>
<feature type="binding site" evidence="1">
    <location>
        <position position="460"/>
    </location>
    <ligand>
        <name>Mg(2+)</name>
        <dbReference type="ChEBI" id="CHEBI:18420"/>
    </ligand>
</feature>
<feature type="binding site" evidence="1">
    <location>
        <position position="462"/>
    </location>
    <ligand>
        <name>Mg(2+)</name>
        <dbReference type="ChEBI" id="CHEBI:18420"/>
    </ligand>
</feature>
<feature type="binding site" evidence="1">
    <location>
        <position position="464"/>
    </location>
    <ligand>
        <name>Mg(2+)</name>
        <dbReference type="ChEBI" id="CHEBI:18420"/>
    </ligand>
</feature>
<feature type="binding site" evidence="1">
    <location>
        <position position="819"/>
    </location>
    <ligand>
        <name>Zn(2+)</name>
        <dbReference type="ChEBI" id="CHEBI:29105"/>
        <label>2</label>
    </ligand>
</feature>
<feature type="binding site" evidence="1">
    <location>
        <position position="893"/>
    </location>
    <ligand>
        <name>Zn(2+)</name>
        <dbReference type="ChEBI" id="CHEBI:29105"/>
        <label>2</label>
    </ligand>
</feature>
<feature type="binding site" evidence="1">
    <location>
        <position position="900"/>
    </location>
    <ligand>
        <name>Zn(2+)</name>
        <dbReference type="ChEBI" id="CHEBI:29105"/>
        <label>2</label>
    </ligand>
</feature>
<feature type="binding site" evidence="1">
    <location>
        <position position="903"/>
    </location>
    <ligand>
        <name>Zn(2+)</name>
        <dbReference type="ChEBI" id="CHEBI:29105"/>
        <label>2</label>
    </ligand>
</feature>
<reference key="1">
    <citation type="journal article" date="2010" name="Genome Biol. Evol.">
        <title>Continuing evolution of Burkholderia mallei through genome reduction and large-scale rearrangements.</title>
        <authorList>
            <person name="Losada L."/>
            <person name="Ronning C.M."/>
            <person name="DeShazer D."/>
            <person name="Woods D."/>
            <person name="Fedorova N."/>
            <person name="Kim H.S."/>
            <person name="Shabalina S.A."/>
            <person name="Pearson T.R."/>
            <person name="Brinkac L."/>
            <person name="Tan P."/>
            <person name="Nandi T."/>
            <person name="Crabtree J."/>
            <person name="Badger J."/>
            <person name="Beckstrom-Sternberg S."/>
            <person name="Saqib M."/>
            <person name="Schutzer S.E."/>
            <person name="Keim P."/>
            <person name="Nierman W.C."/>
        </authorList>
    </citation>
    <scope>NUCLEOTIDE SEQUENCE [LARGE SCALE GENOMIC DNA]</scope>
    <source>
        <strain>1710b</strain>
    </source>
</reference>
<protein>
    <recommendedName>
        <fullName evidence="1">DNA-directed RNA polymerase subunit beta'</fullName>
        <shortName evidence="1">RNAP subunit beta'</shortName>
        <ecNumber evidence="1">2.7.7.6</ecNumber>
    </recommendedName>
    <alternativeName>
        <fullName evidence="1">RNA polymerase subunit beta'</fullName>
    </alternativeName>
    <alternativeName>
        <fullName evidence="1">Transcriptase subunit beta'</fullName>
    </alternativeName>
</protein>
<comment type="function">
    <text evidence="1">DNA-dependent RNA polymerase catalyzes the transcription of DNA into RNA using the four ribonucleoside triphosphates as substrates.</text>
</comment>
<comment type="catalytic activity">
    <reaction evidence="1">
        <text>RNA(n) + a ribonucleoside 5'-triphosphate = RNA(n+1) + diphosphate</text>
        <dbReference type="Rhea" id="RHEA:21248"/>
        <dbReference type="Rhea" id="RHEA-COMP:14527"/>
        <dbReference type="Rhea" id="RHEA-COMP:17342"/>
        <dbReference type="ChEBI" id="CHEBI:33019"/>
        <dbReference type="ChEBI" id="CHEBI:61557"/>
        <dbReference type="ChEBI" id="CHEBI:140395"/>
        <dbReference type="EC" id="2.7.7.6"/>
    </reaction>
</comment>
<comment type="cofactor">
    <cofactor evidence="1">
        <name>Mg(2+)</name>
        <dbReference type="ChEBI" id="CHEBI:18420"/>
    </cofactor>
    <text evidence="1">Binds 1 Mg(2+) ion per subunit.</text>
</comment>
<comment type="cofactor">
    <cofactor evidence="1">
        <name>Zn(2+)</name>
        <dbReference type="ChEBI" id="CHEBI:29105"/>
    </cofactor>
    <text evidence="1">Binds 2 Zn(2+) ions per subunit.</text>
</comment>
<comment type="subunit">
    <text evidence="1">The RNAP catalytic core consists of 2 alpha, 1 beta, 1 beta' and 1 omega subunit. When a sigma factor is associated with the core the holoenzyme is formed, which can initiate transcription.</text>
</comment>
<comment type="similarity">
    <text evidence="1">Belongs to the RNA polymerase beta' chain family.</text>
</comment>
<dbReference type="EC" id="2.7.7.6" evidence="1"/>
<dbReference type="EMBL" id="CP000124">
    <property type="protein sequence ID" value="ABA48368.1"/>
    <property type="molecule type" value="Genomic_DNA"/>
</dbReference>
<dbReference type="RefSeq" id="WP_004521902.1">
    <property type="nucleotide sequence ID" value="NC_007434.1"/>
</dbReference>
<dbReference type="SMR" id="Q3JMQ4"/>
<dbReference type="EnsemblBacteria" id="ABA48368">
    <property type="protein sequence ID" value="ABA48368"/>
    <property type="gene ID" value="BURPS1710b_3785"/>
</dbReference>
<dbReference type="GeneID" id="93061839"/>
<dbReference type="KEGG" id="bpm:BURPS1710b_3785"/>
<dbReference type="HOGENOM" id="CLU_000524_3_1_4"/>
<dbReference type="Proteomes" id="UP000002700">
    <property type="component" value="Chromosome I"/>
</dbReference>
<dbReference type="GO" id="GO:0000428">
    <property type="term" value="C:DNA-directed RNA polymerase complex"/>
    <property type="evidence" value="ECO:0007669"/>
    <property type="project" value="UniProtKB-KW"/>
</dbReference>
<dbReference type="GO" id="GO:0003677">
    <property type="term" value="F:DNA binding"/>
    <property type="evidence" value="ECO:0007669"/>
    <property type="project" value="UniProtKB-UniRule"/>
</dbReference>
<dbReference type="GO" id="GO:0003899">
    <property type="term" value="F:DNA-directed RNA polymerase activity"/>
    <property type="evidence" value="ECO:0007669"/>
    <property type="project" value="UniProtKB-UniRule"/>
</dbReference>
<dbReference type="GO" id="GO:0000287">
    <property type="term" value="F:magnesium ion binding"/>
    <property type="evidence" value="ECO:0007669"/>
    <property type="project" value="UniProtKB-UniRule"/>
</dbReference>
<dbReference type="GO" id="GO:0008270">
    <property type="term" value="F:zinc ion binding"/>
    <property type="evidence" value="ECO:0007669"/>
    <property type="project" value="UniProtKB-UniRule"/>
</dbReference>
<dbReference type="GO" id="GO:0006351">
    <property type="term" value="P:DNA-templated transcription"/>
    <property type="evidence" value="ECO:0007669"/>
    <property type="project" value="UniProtKB-UniRule"/>
</dbReference>
<dbReference type="CDD" id="cd02655">
    <property type="entry name" value="RNAP_beta'_C"/>
    <property type="match status" value="1"/>
</dbReference>
<dbReference type="CDD" id="cd01609">
    <property type="entry name" value="RNAP_beta'_N"/>
    <property type="match status" value="1"/>
</dbReference>
<dbReference type="FunFam" id="1.10.132.30:FF:000003">
    <property type="entry name" value="DNA-directed RNA polymerase subunit beta"/>
    <property type="match status" value="1"/>
</dbReference>
<dbReference type="FunFam" id="1.10.150.390:FF:000002">
    <property type="entry name" value="DNA-directed RNA polymerase subunit beta"/>
    <property type="match status" value="1"/>
</dbReference>
<dbReference type="FunFam" id="4.10.860.120:FF:000001">
    <property type="entry name" value="DNA-directed RNA polymerase subunit beta"/>
    <property type="match status" value="1"/>
</dbReference>
<dbReference type="Gene3D" id="1.10.132.30">
    <property type="match status" value="1"/>
</dbReference>
<dbReference type="Gene3D" id="1.10.150.390">
    <property type="match status" value="1"/>
</dbReference>
<dbReference type="Gene3D" id="1.10.1790.20">
    <property type="match status" value="1"/>
</dbReference>
<dbReference type="Gene3D" id="1.10.40.90">
    <property type="match status" value="1"/>
</dbReference>
<dbReference type="Gene3D" id="2.40.40.20">
    <property type="match status" value="1"/>
</dbReference>
<dbReference type="Gene3D" id="2.40.50.100">
    <property type="match status" value="3"/>
</dbReference>
<dbReference type="Gene3D" id="4.10.860.120">
    <property type="entry name" value="RNA polymerase II, clamp domain"/>
    <property type="match status" value="1"/>
</dbReference>
<dbReference type="Gene3D" id="1.10.274.100">
    <property type="entry name" value="RNA polymerase Rpb1, domain 3"/>
    <property type="match status" value="1"/>
</dbReference>
<dbReference type="HAMAP" id="MF_01322">
    <property type="entry name" value="RNApol_bact_RpoC"/>
    <property type="match status" value="1"/>
</dbReference>
<dbReference type="InterPro" id="IPR045867">
    <property type="entry name" value="DNA-dir_RpoC_beta_prime"/>
</dbReference>
<dbReference type="InterPro" id="IPR012754">
    <property type="entry name" value="DNA-dir_RpoC_beta_prime_bact"/>
</dbReference>
<dbReference type="InterPro" id="IPR000722">
    <property type="entry name" value="RNA_pol_asu"/>
</dbReference>
<dbReference type="InterPro" id="IPR006592">
    <property type="entry name" value="RNA_pol_N"/>
</dbReference>
<dbReference type="InterPro" id="IPR007080">
    <property type="entry name" value="RNA_pol_Rpb1_1"/>
</dbReference>
<dbReference type="InterPro" id="IPR007066">
    <property type="entry name" value="RNA_pol_Rpb1_3"/>
</dbReference>
<dbReference type="InterPro" id="IPR042102">
    <property type="entry name" value="RNA_pol_Rpb1_3_sf"/>
</dbReference>
<dbReference type="InterPro" id="IPR007083">
    <property type="entry name" value="RNA_pol_Rpb1_4"/>
</dbReference>
<dbReference type="InterPro" id="IPR007081">
    <property type="entry name" value="RNA_pol_Rpb1_5"/>
</dbReference>
<dbReference type="InterPro" id="IPR044893">
    <property type="entry name" value="RNA_pol_Rpb1_clamp_domain"/>
</dbReference>
<dbReference type="InterPro" id="IPR038120">
    <property type="entry name" value="Rpb1_funnel_sf"/>
</dbReference>
<dbReference type="NCBIfam" id="TIGR02386">
    <property type="entry name" value="rpoC_TIGR"/>
    <property type="match status" value="1"/>
</dbReference>
<dbReference type="PANTHER" id="PTHR19376">
    <property type="entry name" value="DNA-DIRECTED RNA POLYMERASE"/>
    <property type="match status" value="1"/>
</dbReference>
<dbReference type="PANTHER" id="PTHR19376:SF54">
    <property type="entry name" value="DNA-DIRECTED RNA POLYMERASE SUBUNIT BETA"/>
    <property type="match status" value="1"/>
</dbReference>
<dbReference type="Pfam" id="PF04997">
    <property type="entry name" value="RNA_pol_Rpb1_1"/>
    <property type="match status" value="1"/>
</dbReference>
<dbReference type="Pfam" id="PF00623">
    <property type="entry name" value="RNA_pol_Rpb1_2"/>
    <property type="match status" value="2"/>
</dbReference>
<dbReference type="Pfam" id="PF04983">
    <property type="entry name" value="RNA_pol_Rpb1_3"/>
    <property type="match status" value="1"/>
</dbReference>
<dbReference type="Pfam" id="PF05000">
    <property type="entry name" value="RNA_pol_Rpb1_4"/>
    <property type="match status" value="1"/>
</dbReference>
<dbReference type="Pfam" id="PF04998">
    <property type="entry name" value="RNA_pol_Rpb1_5"/>
    <property type="match status" value="1"/>
</dbReference>
<dbReference type="SMART" id="SM00663">
    <property type="entry name" value="RPOLA_N"/>
    <property type="match status" value="1"/>
</dbReference>
<dbReference type="SUPFAM" id="SSF64484">
    <property type="entry name" value="beta and beta-prime subunits of DNA dependent RNA-polymerase"/>
    <property type="match status" value="1"/>
</dbReference>
<gene>
    <name evidence="1" type="primary">rpoC</name>
    <name type="ordered locus">BURPS1710b_3785</name>
</gene>
<name>RPOC_BURP1</name>
<proteinExistence type="inferred from homology"/>
<keyword id="KW-0240">DNA-directed RNA polymerase</keyword>
<keyword id="KW-0460">Magnesium</keyword>
<keyword id="KW-0479">Metal-binding</keyword>
<keyword id="KW-0548">Nucleotidyltransferase</keyword>
<keyword id="KW-0804">Transcription</keyword>
<keyword id="KW-0808">Transferase</keyword>
<keyword id="KW-0862">Zinc</keyword>